<gene>
    <name type="ordered locus">MIMI_R338</name>
</gene>
<organism>
    <name type="scientific">Acanthamoeba polyphaga mimivirus</name>
    <name type="common">APMV</name>
    <dbReference type="NCBI Taxonomy" id="212035"/>
    <lineage>
        <taxon>Viruses</taxon>
        <taxon>Varidnaviria</taxon>
        <taxon>Bamfordvirae</taxon>
        <taxon>Nucleocytoviricota</taxon>
        <taxon>Megaviricetes</taxon>
        <taxon>Imitervirales</taxon>
        <taxon>Mimiviridae</taxon>
        <taxon>Megamimivirinae</taxon>
        <taxon>Mimivirus</taxon>
        <taxon>Mimivirus bradfordmassiliense</taxon>
    </lineage>
</organism>
<sequence>MSTQNIDISDLKYNIDVNDIEIIDPFIGENKTDDQKYSNPFFLDHNGSEQKFTKTNILADEYKYVYILCLCDDFELNESNINRVNLFFEKDSVVSELTSQTNSITLVQCPFEIIKIASIRSGVVVVNKDVLEYFNHDSVDLLSRELVYLMLQTKESNVRNWIKMYKSDNNLNKFIQQKIFSSYYGINDERFDHEMIKSLGEINDFRFWENPSNCEININEAFKSRRLNINSSSKWNIPESEIEKFLFDFKNVSGSFKSHKYPPGPPDNSSSNTSGQQNTSNTSNTKFKKFKQVFYKIVDANDMLIDKQDVEDLLISNCLSEREKYYLVCLLLSSKNYCHYILNNHKVITSISDIISKYKPIIRYLMGFAWMSLYLEERVKRSKSIESDRFVFDLENASKPPVFPYNPQNPYTNPYFVMTVSSDLLNLSNNVSGVKQSLEYQSGIVDITEFKKRLNLFISGSHEKDILEGANWNNMVITGGSMTAILPRRNPLHALFTKESKADITYEELNRFYQEYYSNSDIDVACNHENIIDFIENVKHIQTIIAKNLGVKDSEIKTDDIKTLAIYINPKLLQSKCSSGEIPYDYDYILKNKDAREIKFYFHELYIEKKKLSNNKNKKILGSRINDNNYFNIIRYCEIEKVTIIINDYSYESDQVDYKIPEQNSGLETVFYLKDNDTIFIKFSETIKYKIHSRHLKHQFEVFRITDKEFFSCIGRFHLPCVRSYYNGTTCYLLPSAITAYMTFTNMDFKYFIGSHDPLNIINKYRLRGYGTILNENELKYYVKYIHVIDKVKKSFNLKDTDNAEKTLGCLDVTNDFFKPKKFIPEEFPLGLESPSYKDNPDITYITEDTISKLYKQNYPKYLADFNQYTTILPNGNIGPLKRWLIDAAYDLLNN</sequence>
<keyword id="KW-1185">Reference proteome</keyword>
<dbReference type="EMBL" id="AY653733">
    <property type="protein sequence ID" value="AAV50607.1"/>
    <property type="molecule type" value="Genomic_DNA"/>
</dbReference>
<dbReference type="Proteomes" id="UP000001134">
    <property type="component" value="Genome"/>
</dbReference>
<reference key="1">
    <citation type="journal article" date="2004" name="Science">
        <title>The 1.2-megabase genome sequence of Mimivirus.</title>
        <authorList>
            <person name="Raoult D."/>
            <person name="Audic S."/>
            <person name="Robert C."/>
            <person name="Abergel C."/>
            <person name="Renesto P."/>
            <person name="Ogata H."/>
            <person name="La Scola B."/>
            <person name="Susan M."/>
            <person name="Claverie J.-M."/>
        </authorList>
    </citation>
    <scope>NUCLEOTIDE SEQUENCE [LARGE SCALE GENOMIC DNA]</scope>
    <source>
        <strain>Rowbotham-Bradford</strain>
    </source>
</reference>
<proteinExistence type="predicted"/>
<accession>Q5UQS9</accession>
<feature type="chain" id="PRO_0000253420" description="Uncharacterized protein R338">
    <location>
        <begin position="1"/>
        <end position="895"/>
    </location>
</feature>
<feature type="region of interest" description="Disordered" evidence="1">
    <location>
        <begin position="257"/>
        <end position="283"/>
    </location>
</feature>
<feature type="compositionally biased region" description="Low complexity" evidence="1">
    <location>
        <begin position="268"/>
        <end position="283"/>
    </location>
</feature>
<name>YR338_MIMIV</name>
<protein>
    <recommendedName>
        <fullName>Uncharacterized protein R338</fullName>
    </recommendedName>
</protein>
<organismHost>
    <name type="scientific">Acanthamoeba polyphaga</name>
    <name type="common">Amoeba</name>
    <dbReference type="NCBI Taxonomy" id="5757"/>
</organismHost>
<evidence type="ECO:0000256" key="1">
    <source>
        <dbReference type="SAM" id="MobiDB-lite"/>
    </source>
</evidence>